<accession>Q63416</accession>
<comment type="function">
    <text evidence="1">May act as a carrier of hyaluronan in serum or as a binding protein between hyaluronan and other matrix protein, including those on cell surfaces in tissues to regulate the localization, synthesis and degradation of hyaluronan which are essential to cells undergoing biological processes.</text>
</comment>
<comment type="subunit">
    <text evidence="2">I-alpha-I plasma protease inhibitors are assembled from one or two heavy chains (HC) and one light chain, bikunin. Pre-alpha-inhibitor (P-alpha-I) is composed of ITIH3/HC3 and bikunin.</text>
</comment>
<comment type="subcellular location">
    <subcellularLocation>
        <location evidence="1">Secreted</location>
    </subcellularLocation>
</comment>
<comment type="PTM">
    <text>Heavy chains are linked to bikunin via chondroitin 4-sulfate esterified to the alpha-carboxyl of the C-terminal aspartate after propeptide cleavage.</text>
</comment>
<comment type="similarity">
    <text evidence="6">Belongs to the ITIH family.</text>
</comment>
<protein>
    <recommendedName>
        <fullName>Inter-alpha-trypsin inhibitor heavy chain H3</fullName>
        <shortName>ITI heavy chain H3</shortName>
        <shortName>ITI-HC3</shortName>
        <shortName>Inter-alpha-inhibitor heavy chain 3</shortName>
    </recommendedName>
</protein>
<sequence>MVTLWWPCLVLALLSGLETSGFPRSPLRLLGKRSLPEGVVDGIEIYSTKISCKVTSRFAHNVVTTRAVNRADKAKEVSFDVELPKTAFITNFTLTIDGVTYPGSVKEKEVAQKQYEKAVSQGKTAGLVKASGRKLEKFTVSVNVAAGSKVIFELTYEELLKRNKGKYEMYLKVQPKQLVRHFEIDAHIFEPQGISMLDADASFITNDLLGSALTKSFSGKKGHVSFKPSLDQQRSCPTCTDSLLNGDFTIVYDVNRESPGNVQIVNGYFVHFFAPQGLPVVPKNIAFVIDVSGSMSGRKIQQTREALLKILDDMKEEDYLNFILFSTGVTTWKDHLVKATPANLEEARAFVKNIRDRSMTNINDGLLRGIEMLNKAREDHLVPERSTSILVMLTDGDANTGESRPEKIQENVRNAIRGKFPLYNLGFGNNLNYNFLESLALENHGFARRIYEDSDASLQLQGFYEEVANPLLTNVELEYPENAILDLTRNSYPHFYDGSEIVVAGRLVDRNVDNFKADVKGHGALNDLTFTEEVDMKEMDAALKEQGYIFGDYIERLWAYLTIEQLLEKRKNARGDEKENITAEALELSLKYHFVTPLTSMVVTKPEDNEDQTAIADKPGEEAISASTAYLTSQQSSHSPYYYVDGDPHFIIQVPGKNDTICFNIDEKPGTVLSLIQDPVTGIAVTGQIIGEKGNNASSRTGKTYFGKLGIANAWMDFRIEVTTEKIILGNGDALSTFSWLDTVTVTQTGLSVTINRKKNMVVSFEDGISFVIVLHQVWKKHPVHQDFLGFYVVDSHRMSAQTHGLLGQFFQPFDFKVFDVRPGSDPMKPDATMVVKSHRLTVTRGSQKDYRKDASVGTKVVCWFVHNNGEGFIDGVHTDYIVPSLF</sequence>
<organism>
    <name type="scientific">Rattus norvegicus</name>
    <name type="common">Rat</name>
    <dbReference type="NCBI Taxonomy" id="10116"/>
    <lineage>
        <taxon>Eukaryota</taxon>
        <taxon>Metazoa</taxon>
        <taxon>Chordata</taxon>
        <taxon>Craniata</taxon>
        <taxon>Vertebrata</taxon>
        <taxon>Euteleostomi</taxon>
        <taxon>Mammalia</taxon>
        <taxon>Eutheria</taxon>
        <taxon>Euarchontoglires</taxon>
        <taxon>Glires</taxon>
        <taxon>Rodentia</taxon>
        <taxon>Myomorpha</taxon>
        <taxon>Muroidea</taxon>
        <taxon>Muridae</taxon>
        <taxon>Murinae</taxon>
        <taxon>Rattus</taxon>
    </lineage>
</organism>
<proteinExistence type="evidence at transcript level"/>
<reference key="1">
    <citation type="submission" date="1994-12" db="EMBL/GenBank/DDBJ databases">
        <authorList>
            <person name="Blom A."/>
            <person name="Fries E."/>
        </authorList>
    </citation>
    <scope>NUCLEOTIDE SEQUENCE [MRNA]</scope>
    <source>
        <strain>Sprague-Dawley</strain>
        <tissue>Liver</tissue>
    </source>
</reference>
<gene>
    <name type="primary">Itih3</name>
</gene>
<dbReference type="EMBL" id="X83231">
    <property type="protein sequence ID" value="CAA58233.1"/>
    <property type="molecule type" value="mRNA"/>
</dbReference>
<dbReference type="RefSeq" id="NP_059047.1">
    <property type="nucleotide sequence ID" value="NM_017351.1"/>
</dbReference>
<dbReference type="SMR" id="Q63416"/>
<dbReference type="BioGRID" id="248430">
    <property type="interactions" value="1"/>
</dbReference>
<dbReference type="FunCoup" id="Q63416">
    <property type="interactions" value="56"/>
</dbReference>
<dbReference type="IntAct" id="Q63416">
    <property type="interactions" value="1"/>
</dbReference>
<dbReference type="MINT" id="Q63416"/>
<dbReference type="STRING" id="10116.ENSRNOP00000043221"/>
<dbReference type="GlyCosmos" id="Q63416">
    <property type="glycosylation" value="2 sites, No reported glycans"/>
</dbReference>
<dbReference type="GlyGen" id="Q63416">
    <property type="glycosylation" value="2 sites"/>
</dbReference>
<dbReference type="PhosphoSitePlus" id="Q63416"/>
<dbReference type="SwissPalm" id="Q63416"/>
<dbReference type="PaxDb" id="10116-ENSRNOP00000023984"/>
<dbReference type="Ensembl" id="ENSRNOT00000023984.7">
    <property type="protein sequence ID" value="ENSRNOP00000023984.4"/>
    <property type="gene ID" value="ENSRNOG00000017689.8"/>
</dbReference>
<dbReference type="GeneID" id="50693"/>
<dbReference type="KEGG" id="rno:50693"/>
<dbReference type="UCSC" id="RGD:620633">
    <property type="organism name" value="rat"/>
</dbReference>
<dbReference type="AGR" id="RGD:620633"/>
<dbReference type="CTD" id="3699"/>
<dbReference type="RGD" id="620633">
    <property type="gene designation" value="Itih3"/>
</dbReference>
<dbReference type="eggNOG" id="ENOG502QPS2">
    <property type="taxonomic scope" value="Eukaryota"/>
</dbReference>
<dbReference type="GeneTree" id="ENSGT00940000154554"/>
<dbReference type="HOGENOM" id="CLU_008101_0_0_1"/>
<dbReference type="InParanoid" id="Q63416"/>
<dbReference type="Reactome" id="R-RNO-114608">
    <property type="pathway name" value="Platelet degranulation"/>
</dbReference>
<dbReference type="PRO" id="PR:Q63416"/>
<dbReference type="Proteomes" id="UP000002494">
    <property type="component" value="Chromosome 16"/>
</dbReference>
<dbReference type="Bgee" id="ENSRNOG00000017689">
    <property type="expression patterns" value="Expressed in liver and 19 other cell types or tissues"/>
</dbReference>
<dbReference type="ExpressionAtlas" id="Q63416">
    <property type="expression patterns" value="baseline and differential"/>
</dbReference>
<dbReference type="GO" id="GO:0005576">
    <property type="term" value="C:extracellular region"/>
    <property type="evidence" value="ECO:0000304"/>
    <property type="project" value="RGD"/>
</dbReference>
<dbReference type="GO" id="GO:0004867">
    <property type="term" value="F:serine-type endopeptidase inhibitor activity"/>
    <property type="evidence" value="ECO:0007669"/>
    <property type="project" value="UniProtKB-KW"/>
</dbReference>
<dbReference type="GO" id="GO:0030212">
    <property type="term" value="P:hyaluronan metabolic process"/>
    <property type="evidence" value="ECO:0007669"/>
    <property type="project" value="InterPro"/>
</dbReference>
<dbReference type="FunFam" id="3.40.50.410:FF:000013">
    <property type="entry name" value="inter-alpha-trypsin inhibitor heavy chain H2"/>
    <property type="match status" value="1"/>
</dbReference>
<dbReference type="Gene3D" id="3.40.50.410">
    <property type="entry name" value="von Willebrand factor, type A domain"/>
    <property type="match status" value="1"/>
</dbReference>
<dbReference type="InterPro" id="IPR010600">
    <property type="entry name" value="ITI_HC_C"/>
</dbReference>
<dbReference type="InterPro" id="IPR050934">
    <property type="entry name" value="ITIH"/>
</dbReference>
<dbReference type="InterPro" id="IPR013694">
    <property type="entry name" value="VIT"/>
</dbReference>
<dbReference type="InterPro" id="IPR002035">
    <property type="entry name" value="VWF_A"/>
</dbReference>
<dbReference type="InterPro" id="IPR036465">
    <property type="entry name" value="vWFA_dom_sf"/>
</dbReference>
<dbReference type="PANTHER" id="PTHR10338">
    <property type="entry name" value="INTER-ALPHA-TRYPSIN INHIBITOR HEAVY CHAIN FAMILY MEMBER"/>
    <property type="match status" value="1"/>
</dbReference>
<dbReference type="PANTHER" id="PTHR10338:SF115">
    <property type="entry name" value="INTER-ALPHA-TRYPSIN INHIBITOR HEAVY CHAIN H3"/>
    <property type="match status" value="1"/>
</dbReference>
<dbReference type="Pfam" id="PF06668">
    <property type="entry name" value="ITI_HC_C"/>
    <property type="match status" value="1"/>
</dbReference>
<dbReference type="Pfam" id="PF08487">
    <property type="entry name" value="VIT"/>
    <property type="match status" value="1"/>
</dbReference>
<dbReference type="Pfam" id="PF00092">
    <property type="entry name" value="VWA"/>
    <property type="match status" value="1"/>
</dbReference>
<dbReference type="SMART" id="SM00609">
    <property type="entry name" value="VIT"/>
    <property type="match status" value="1"/>
</dbReference>
<dbReference type="SMART" id="SM00327">
    <property type="entry name" value="VWA"/>
    <property type="match status" value="1"/>
</dbReference>
<dbReference type="SUPFAM" id="SSF53300">
    <property type="entry name" value="vWA-like"/>
    <property type="match status" value="1"/>
</dbReference>
<dbReference type="PROSITE" id="PS51468">
    <property type="entry name" value="VIT"/>
    <property type="match status" value="1"/>
</dbReference>
<dbReference type="PROSITE" id="PS50234">
    <property type="entry name" value="VWFA"/>
    <property type="match status" value="1"/>
</dbReference>
<keyword id="KW-0165">Cleavage on pair of basic residues</keyword>
<keyword id="KW-0325">Glycoprotein</keyword>
<keyword id="KW-0646">Protease inhibitor</keyword>
<keyword id="KW-0654">Proteoglycan</keyword>
<keyword id="KW-1185">Reference proteome</keyword>
<keyword id="KW-0964">Secreted</keyword>
<keyword id="KW-0722">Serine protease inhibitor</keyword>
<keyword id="KW-0732">Signal</keyword>
<feature type="signal peptide" evidence="3">
    <location>
        <begin position="1"/>
        <end position="21"/>
    </location>
</feature>
<feature type="propeptide" id="PRO_0000016538" evidence="1">
    <location>
        <begin position="22"/>
        <end position="33"/>
    </location>
</feature>
<feature type="chain" id="PRO_0000016539" description="Inter-alpha-trypsin inhibitor heavy chain H3">
    <location>
        <begin position="34"/>
        <end position="647"/>
    </location>
</feature>
<feature type="propeptide" id="PRO_0000016540" evidence="1">
    <location>
        <begin position="648"/>
        <end position="887"/>
    </location>
</feature>
<feature type="domain" description="VIT" evidence="5">
    <location>
        <begin position="29"/>
        <end position="158"/>
    </location>
</feature>
<feature type="domain" description="VWFA" evidence="4">
    <location>
        <begin position="282"/>
        <end position="442"/>
    </location>
</feature>
<feature type="modified residue" description="Aspartate 1-(chondroitin 4-sulfate)-ester" evidence="1">
    <location>
        <position position="647"/>
    </location>
</feature>
<feature type="glycosylation site" description="N-linked (GlcNAc...) asparagine" evidence="3">
    <location>
        <position position="91"/>
    </location>
</feature>
<feature type="glycosylation site" description="N-linked (GlcNAc...) asparagine" evidence="3">
    <location>
        <position position="580"/>
    </location>
</feature>
<evidence type="ECO:0000250" key="1"/>
<evidence type="ECO:0000250" key="2">
    <source>
        <dbReference type="UniProtKB" id="Q06033"/>
    </source>
</evidence>
<evidence type="ECO:0000255" key="3"/>
<evidence type="ECO:0000255" key="4">
    <source>
        <dbReference type="PROSITE-ProRule" id="PRU00219"/>
    </source>
</evidence>
<evidence type="ECO:0000255" key="5">
    <source>
        <dbReference type="PROSITE-ProRule" id="PRU00801"/>
    </source>
</evidence>
<evidence type="ECO:0000305" key="6"/>
<name>ITIH3_RAT</name>